<dbReference type="EMBL" id="U00008">
    <property type="protein sequence ID" value="AAA16395.1"/>
    <property type="status" value="ALT_INIT"/>
    <property type="molecule type" value="Genomic_DNA"/>
</dbReference>
<dbReference type="EMBL" id="U00096">
    <property type="protein sequence ID" value="AAC75263.2"/>
    <property type="molecule type" value="Genomic_DNA"/>
</dbReference>
<dbReference type="EMBL" id="AP009048">
    <property type="protein sequence ID" value="BAE76666.1"/>
    <property type="molecule type" value="Genomic_DNA"/>
</dbReference>
<dbReference type="RefSeq" id="NP_416707.4">
    <property type="nucleotide sequence ID" value="NC_000913.3"/>
</dbReference>
<dbReference type="RefSeq" id="WP_000835174.1">
    <property type="nucleotide sequence ID" value="NZ_SSZK01000027.1"/>
</dbReference>
<dbReference type="SMR" id="P0ABL3"/>
<dbReference type="BioGRID" id="4262224">
    <property type="interactions" value="27"/>
</dbReference>
<dbReference type="ComplexPortal" id="CPX-3447">
    <property type="entry name" value="NapAB nitrate reductase complex"/>
</dbReference>
<dbReference type="FunCoup" id="P0ABL3">
    <property type="interactions" value="173"/>
</dbReference>
<dbReference type="IntAct" id="P0ABL3">
    <property type="interactions" value="1"/>
</dbReference>
<dbReference type="STRING" id="511145.b2203"/>
<dbReference type="TCDB" id="3.D.11.1.1">
    <property type="family name" value="the periplasmic nitrate reductase complex (nap) complex family"/>
</dbReference>
<dbReference type="jPOST" id="P0ABL3"/>
<dbReference type="PaxDb" id="511145-b2203"/>
<dbReference type="EnsemblBacteria" id="AAC75263">
    <property type="protein sequence ID" value="AAC75263"/>
    <property type="gene ID" value="b2203"/>
</dbReference>
<dbReference type="GeneID" id="93774975"/>
<dbReference type="GeneID" id="946698"/>
<dbReference type="KEGG" id="ecj:JW5367"/>
<dbReference type="KEGG" id="eco:b2203"/>
<dbReference type="KEGG" id="ecoc:C3026_12310"/>
<dbReference type="PATRIC" id="fig|1411691.4.peg.33"/>
<dbReference type="EchoBASE" id="EB1991"/>
<dbReference type="eggNOG" id="COG3043">
    <property type="taxonomic scope" value="Bacteria"/>
</dbReference>
<dbReference type="HOGENOM" id="CLU_103367_3_0_6"/>
<dbReference type="InParanoid" id="P0ABL3"/>
<dbReference type="OMA" id="PIVPNEF"/>
<dbReference type="OrthoDB" id="13290at2"/>
<dbReference type="PhylomeDB" id="P0ABL3"/>
<dbReference type="BioCyc" id="EcoCyc:NAPB-MONOMER"/>
<dbReference type="BioCyc" id="MetaCyc:NAPB-MONOMER"/>
<dbReference type="BRENDA" id="1.9.6.1">
    <property type="organism ID" value="2165"/>
</dbReference>
<dbReference type="PHI-base" id="PHI:10525"/>
<dbReference type="PRO" id="PR:P0ABL3"/>
<dbReference type="Proteomes" id="UP000000625">
    <property type="component" value="Chromosome"/>
</dbReference>
<dbReference type="GO" id="GO:0009325">
    <property type="term" value="C:nitrate reductase complex"/>
    <property type="evidence" value="ECO:0000353"/>
    <property type="project" value="ComplexPortal"/>
</dbReference>
<dbReference type="GO" id="GO:0042597">
    <property type="term" value="C:periplasmic space"/>
    <property type="evidence" value="ECO:0000314"/>
    <property type="project" value="ComplexPortal"/>
</dbReference>
<dbReference type="GO" id="GO:0046872">
    <property type="term" value="F:metal ion binding"/>
    <property type="evidence" value="ECO:0007669"/>
    <property type="project" value="UniProtKB-KW"/>
</dbReference>
<dbReference type="GO" id="GO:0009061">
    <property type="term" value="P:anaerobic respiration"/>
    <property type="evidence" value="ECO:0000315"/>
    <property type="project" value="EcoCyc"/>
</dbReference>
<dbReference type="GO" id="GO:0042128">
    <property type="term" value="P:nitrate assimilation"/>
    <property type="evidence" value="ECO:0000303"/>
    <property type="project" value="ComplexPortal"/>
</dbReference>
<dbReference type="FunFam" id="1.10.1130.10:FF:000001">
    <property type="entry name" value="Periplasmic nitrate reductase, electron transfer subunit"/>
    <property type="match status" value="1"/>
</dbReference>
<dbReference type="Gene3D" id="1.10.1130.10">
    <property type="entry name" value="Flavocytochrome C3, Chain A"/>
    <property type="match status" value="1"/>
</dbReference>
<dbReference type="InterPro" id="IPR036280">
    <property type="entry name" value="Multihaem_cyt_sf"/>
</dbReference>
<dbReference type="InterPro" id="IPR005591">
    <property type="entry name" value="NapB"/>
</dbReference>
<dbReference type="NCBIfam" id="NF008609">
    <property type="entry name" value="PRK11586.1"/>
    <property type="match status" value="1"/>
</dbReference>
<dbReference type="PANTHER" id="PTHR38604">
    <property type="entry name" value="PERIPLASMIC NITRATE REDUCTASE, ELECTRON TRANSFER SUBUNIT"/>
    <property type="match status" value="1"/>
</dbReference>
<dbReference type="PANTHER" id="PTHR38604:SF1">
    <property type="entry name" value="PERIPLASMIC NITRATE REDUCTASE, ELECTRON TRANSFER SUBUNIT"/>
    <property type="match status" value="1"/>
</dbReference>
<dbReference type="Pfam" id="PF03892">
    <property type="entry name" value="NapB"/>
    <property type="match status" value="1"/>
</dbReference>
<dbReference type="PIRSF" id="PIRSF006105">
    <property type="entry name" value="NapB"/>
    <property type="match status" value="1"/>
</dbReference>
<dbReference type="SUPFAM" id="SSF48695">
    <property type="entry name" value="Multiheme cytochromes"/>
    <property type="match status" value="1"/>
</dbReference>
<dbReference type="PROSITE" id="PS51008">
    <property type="entry name" value="MULTIHEME_CYTC"/>
    <property type="match status" value="1"/>
</dbReference>
<organism>
    <name type="scientific">Escherichia coli (strain K12)</name>
    <dbReference type="NCBI Taxonomy" id="83333"/>
    <lineage>
        <taxon>Bacteria</taxon>
        <taxon>Pseudomonadati</taxon>
        <taxon>Pseudomonadota</taxon>
        <taxon>Gammaproteobacteria</taxon>
        <taxon>Enterobacterales</taxon>
        <taxon>Enterobacteriaceae</taxon>
        <taxon>Escherichia</taxon>
    </lineage>
</organism>
<keyword id="KW-0903">Direct protein sequencing</keyword>
<keyword id="KW-0249">Electron transport</keyword>
<keyword id="KW-0349">Heme</keyword>
<keyword id="KW-0408">Iron</keyword>
<keyword id="KW-0479">Metal-binding</keyword>
<keyword id="KW-0574">Periplasm</keyword>
<keyword id="KW-1185">Reference proteome</keyword>
<keyword id="KW-0732">Signal</keyword>
<keyword id="KW-0813">Transport</keyword>
<sequence length="149" mass="16297">MKSHDLKKALCQWTAMLALVVSGAVWAANGVDFSQSPEVSGTQEGAIRMPKEQDRMPLNYVNQPPMIPHSVEGYQVTTNTNRCLQCHGVESYRTTGAPRISPTHFMDSDGKVGAEVAPRRYFCLQCHVPQADTAPIVGNTFTPSKGYGK</sequence>
<protein>
    <recommendedName>
        <fullName>Periplasmic nitrate reductase, electron transfer subunit</fullName>
    </recommendedName>
    <alternativeName>
        <fullName>Diheme cytochrome c NapB</fullName>
    </alternativeName>
</protein>
<comment type="function">
    <text evidence="2 3 4">Electron transfer subunit of the periplasmic nitrate reductase complex NapAB. Receives electrons from the membrane-anchored tetraheme c-type NapC protein and transfers these to NapA subunit, thus allowing electron flow between membrane and periplasm. Essential for periplasmic nitrate reduction with nitrate as the terminal electron acceptor.</text>
</comment>
<comment type="subunit">
    <text evidence="2 4">Component of the periplasmic nitrate reductase NapAB complex composed of NapA and NapB. The interaction between NapA and NapB is weak.</text>
</comment>
<comment type="interaction">
    <interactant intactId="EBI-17171907">
        <id>P0ABL3</id>
    </interactant>
    <interactant intactId="EBI-554952">
        <id>P33937</id>
        <label>napA</label>
    </interactant>
    <organismsDiffer>false</organismsDiffer>
    <experiments>2</experiments>
</comment>
<comment type="subcellular location">
    <subcellularLocation>
        <location evidence="2 3 4">Periplasm</location>
    </subcellularLocation>
</comment>
<comment type="PTM">
    <text>Binds 2 heme C groups per subunit.</text>
</comment>
<comment type="disruption phenotype">
    <text evidence="3">Deletion leads to reduced levels of formate- or glycerol-dependent activity after anaerobic growth in the presence of nitrate.</text>
</comment>
<comment type="similarity">
    <text evidence="5">Belongs to the NapB family.</text>
</comment>
<comment type="sequence caution" evidence="5">
    <conflict type="erroneous initiation">
        <sequence resource="EMBL-CDS" id="AAA16395"/>
    </conflict>
    <text>Extended N-terminus.</text>
</comment>
<name>NAPB_ECOLI</name>
<feature type="signal peptide" evidence="2">
    <location>
        <begin position="1"/>
        <end position="27"/>
    </location>
</feature>
<feature type="chain" id="PRO_0000006588" description="Periplasmic nitrate reductase, electron transfer subunit">
    <location>
        <begin position="28"/>
        <end position="149"/>
    </location>
</feature>
<feature type="binding site" description="axial binding residue" evidence="1">
    <location>
        <position position="69"/>
    </location>
    <ligand>
        <name>heme c</name>
        <dbReference type="ChEBI" id="CHEBI:61717"/>
        <label>1</label>
    </ligand>
    <ligandPart>
        <name>Fe</name>
        <dbReference type="ChEBI" id="CHEBI:18248"/>
    </ligandPart>
</feature>
<feature type="binding site" description="covalent" evidence="1">
    <location>
        <position position="83"/>
    </location>
    <ligand>
        <name>heme c</name>
        <dbReference type="ChEBI" id="CHEBI:61717"/>
        <label>1</label>
    </ligand>
</feature>
<feature type="binding site" description="covalent" evidence="1">
    <location>
        <position position="86"/>
    </location>
    <ligand>
        <name>heme c</name>
        <dbReference type="ChEBI" id="CHEBI:61717"/>
        <label>1</label>
    </ligand>
</feature>
<feature type="binding site" description="axial binding residue" evidence="1">
    <location>
        <position position="87"/>
    </location>
    <ligand>
        <name>heme c</name>
        <dbReference type="ChEBI" id="CHEBI:61717"/>
        <label>1</label>
    </ligand>
    <ligandPart>
        <name>Fe</name>
        <dbReference type="ChEBI" id="CHEBI:18248"/>
    </ligandPart>
</feature>
<feature type="binding site" description="axial binding residue" evidence="1">
    <location>
        <position position="104"/>
    </location>
    <ligand>
        <name>heme c</name>
        <dbReference type="ChEBI" id="CHEBI:61717"/>
        <label>2</label>
    </ligand>
    <ligandPart>
        <name>Fe</name>
        <dbReference type="ChEBI" id="CHEBI:18248"/>
    </ligandPart>
</feature>
<feature type="binding site" description="covalent" evidence="1">
    <location>
        <position position="123"/>
    </location>
    <ligand>
        <name>heme c</name>
        <dbReference type="ChEBI" id="CHEBI:61717"/>
        <label>2</label>
    </ligand>
</feature>
<feature type="binding site" description="covalent" evidence="1">
    <location>
        <position position="126"/>
    </location>
    <ligand>
        <name>heme c</name>
        <dbReference type="ChEBI" id="CHEBI:61717"/>
        <label>2</label>
    </ligand>
</feature>
<feature type="binding site" description="axial binding residue" evidence="1">
    <location>
        <position position="127"/>
    </location>
    <ligand>
        <name>heme c</name>
        <dbReference type="ChEBI" id="CHEBI:61717"/>
        <label>2</label>
    </ligand>
    <ligandPart>
        <name>Fe</name>
        <dbReference type="ChEBI" id="CHEBI:18248"/>
    </ligandPart>
</feature>
<feature type="sequence conflict" description="In Ref. 1; AAA16395." evidence="5" ref="1">
    <original>HVPQADTAPIVGNTFTPSKGYGK</original>
    <variation>QYRRPIPRQSWGIPLPHQKVTGNKRLLWEILTVSLV</variation>
    <location>
        <begin position="127"/>
        <end position="149"/>
    </location>
</feature>
<gene>
    <name type="primary">napB</name>
    <name type="synonym">yejY</name>
    <name type="ordered locus">b2203</name>
    <name type="ordered locus">JW5367</name>
</gene>
<reference key="1">
    <citation type="submission" date="1993-10" db="EMBL/GenBank/DDBJ databases">
        <authorList>
            <person name="Richterich P."/>
            <person name="Lakey N."/>
            <person name="Gryan G."/>
            <person name="Jaehn L."/>
            <person name="Mintz L."/>
            <person name="Robison K."/>
            <person name="Church G.M."/>
        </authorList>
    </citation>
    <scope>NUCLEOTIDE SEQUENCE [GENOMIC DNA]</scope>
    <source>
        <strain>K12 / BHB2600</strain>
    </source>
</reference>
<reference key="2">
    <citation type="journal article" date="1997" name="Science">
        <title>The complete genome sequence of Escherichia coli K-12.</title>
        <authorList>
            <person name="Blattner F.R."/>
            <person name="Plunkett G. III"/>
            <person name="Bloch C.A."/>
            <person name="Perna N.T."/>
            <person name="Burland V."/>
            <person name="Riley M."/>
            <person name="Collado-Vides J."/>
            <person name="Glasner J.D."/>
            <person name="Rode C.K."/>
            <person name="Mayhew G.F."/>
            <person name="Gregor J."/>
            <person name="Davis N.W."/>
            <person name="Kirkpatrick H.A."/>
            <person name="Goeden M.A."/>
            <person name="Rose D.J."/>
            <person name="Mau B."/>
            <person name="Shao Y."/>
        </authorList>
    </citation>
    <scope>NUCLEOTIDE SEQUENCE [LARGE SCALE GENOMIC DNA]</scope>
    <source>
        <strain>K12 / MG1655 / ATCC 47076</strain>
    </source>
</reference>
<reference key="3">
    <citation type="journal article" date="2006" name="Mol. Syst. Biol.">
        <title>Highly accurate genome sequences of Escherichia coli K-12 strains MG1655 and W3110.</title>
        <authorList>
            <person name="Hayashi K."/>
            <person name="Morooka N."/>
            <person name="Yamamoto Y."/>
            <person name="Fujita K."/>
            <person name="Isono K."/>
            <person name="Choi S."/>
            <person name="Ohtsubo E."/>
            <person name="Baba T."/>
            <person name="Wanner B.L."/>
            <person name="Mori H."/>
            <person name="Horiuchi T."/>
        </authorList>
    </citation>
    <scope>NUCLEOTIDE SEQUENCE [LARGE SCALE GENOMIC DNA]</scope>
    <source>
        <strain>K12 / W3110 / ATCC 27325 / DSM 5911</strain>
    </source>
</reference>
<reference key="4">
    <citation type="journal article" date="1999" name="FEMS Microbiol. Lett.">
        <title>The periplasmic nitrate reductase from Escherichia coli: a heterodimeric molybdoprotein with a double-arginine signal sequence and an unusual leader peptide cleavage site.</title>
        <authorList>
            <person name="Thomas G."/>
            <person name="Potter L."/>
            <person name="Cole J.A."/>
        </authorList>
    </citation>
    <scope>PROTEIN SEQUENCE OF 28-34</scope>
    <scope>FUNCTION</scope>
    <scope>SUBUNIT</scope>
    <scope>SUBCELLULAR LOCATION</scope>
    <scope>PTM</scope>
    <source>
        <strain>K12</strain>
    </source>
</reference>
<reference key="5">
    <citation type="journal article" date="1994" name="FEMS Microbiol. Lett.">
        <title>A reassessment of the range of c-type cytochromes synthesized by Escherichia coli K-12.</title>
        <authorList>
            <person name="Iobbi-Nivol C."/>
            <person name="Crooke H."/>
            <person name="Griffiths L."/>
            <person name="Grov J."/>
            <person name="Hussain H."/>
            <person name="Pommier J."/>
            <person name="Mejean V."/>
            <person name="Cole J.A."/>
        </authorList>
    </citation>
    <scope>CHARACTERIZATION AS A CYTOCHROME C</scope>
</reference>
<reference key="6">
    <citation type="journal article" date="1999" name="Biochem. J.">
        <title>Essential roles for the products of the napABCD genes, but not napFGH, in periplasmic nitrate reduction by Escherichia coli K-12.</title>
        <authorList>
            <person name="Potter L.C."/>
            <person name="Cole J.A."/>
        </authorList>
    </citation>
    <scope>FUNCTION</scope>
    <scope>SUBCELLULAR LOCATION</scope>
    <scope>PTM</scope>
    <scope>DISRUPTION PHENOTYPE</scope>
    <source>
        <strain>K12</strain>
    </source>
</reference>
<reference key="7">
    <citation type="journal article" date="2007" name="J. Biol. Chem.">
        <title>Spectropotentiometric and structural analysis of the periplasmic nitrate reductase from Escherichia coli.</title>
        <authorList>
            <person name="Jepson B.J."/>
            <person name="Mohan S."/>
            <person name="Clarke T.A."/>
            <person name="Gates A.J."/>
            <person name="Cole J.A."/>
            <person name="Butler C.S."/>
            <person name="Butt J.N."/>
            <person name="Hemmings A.M."/>
            <person name="Richardson D.J."/>
        </authorList>
    </citation>
    <scope>FUNCTION</scope>
    <scope>EPR SPECTROSCOPY</scope>
    <scope>ABSORPTION SPECTROSCOPY</scope>
    <scope>SUBUNIT</scope>
    <scope>SUBCELLULAR LOCATION</scope>
    <scope>PTM</scope>
    <source>
        <strain>K12</strain>
    </source>
</reference>
<evidence type="ECO:0000250" key="1"/>
<evidence type="ECO:0000269" key="2">
    <source>
    </source>
</evidence>
<evidence type="ECO:0000269" key="3">
    <source>
    </source>
</evidence>
<evidence type="ECO:0000269" key="4">
    <source>
    </source>
</evidence>
<evidence type="ECO:0000305" key="5"/>
<proteinExistence type="evidence at protein level"/>
<accession>P0ABL3</accession>
<accession>P33933</accession>
<accession>P76453</accession>
<accession>Q2MAP0</accession>